<dbReference type="EMBL" id="CP000931">
    <property type="protein sequence ID" value="ABZ76379.1"/>
    <property type="molecule type" value="Genomic_DNA"/>
</dbReference>
<dbReference type="RefSeq" id="WP_012142935.1">
    <property type="nucleotide sequence ID" value="NC_010334.1"/>
</dbReference>
<dbReference type="SMR" id="B0TQY4"/>
<dbReference type="STRING" id="458817.Shal_1814"/>
<dbReference type="KEGG" id="shl:Shal_1814"/>
<dbReference type="eggNOG" id="COG0776">
    <property type="taxonomic scope" value="Bacteria"/>
</dbReference>
<dbReference type="HOGENOM" id="CLU_105066_1_3_6"/>
<dbReference type="OrthoDB" id="9797747at2"/>
<dbReference type="Proteomes" id="UP000001317">
    <property type="component" value="Chromosome"/>
</dbReference>
<dbReference type="GO" id="GO:0005829">
    <property type="term" value="C:cytosol"/>
    <property type="evidence" value="ECO:0007669"/>
    <property type="project" value="TreeGrafter"/>
</dbReference>
<dbReference type="GO" id="GO:0003677">
    <property type="term" value="F:DNA binding"/>
    <property type="evidence" value="ECO:0007669"/>
    <property type="project" value="UniProtKB-UniRule"/>
</dbReference>
<dbReference type="GO" id="GO:0030527">
    <property type="term" value="F:structural constituent of chromatin"/>
    <property type="evidence" value="ECO:0007669"/>
    <property type="project" value="InterPro"/>
</dbReference>
<dbReference type="GO" id="GO:0006310">
    <property type="term" value="P:DNA recombination"/>
    <property type="evidence" value="ECO:0007669"/>
    <property type="project" value="UniProtKB-UniRule"/>
</dbReference>
<dbReference type="GO" id="GO:0009893">
    <property type="term" value="P:positive regulation of metabolic process"/>
    <property type="evidence" value="ECO:0007669"/>
    <property type="project" value="UniProtKB-ARBA"/>
</dbReference>
<dbReference type="GO" id="GO:0006355">
    <property type="term" value="P:regulation of DNA-templated transcription"/>
    <property type="evidence" value="ECO:0007669"/>
    <property type="project" value="UniProtKB-UniRule"/>
</dbReference>
<dbReference type="GO" id="GO:0006417">
    <property type="term" value="P:regulation of translation"/>
    <property type="evidence" value="ECO:0007669"/>
    <property type="project" value="UniProtKB-UniRule"/>
</dbReference>
<dbReference type="CDD" id="cd13835">
    <property type="entry name" value="IHF_A"/>
    <property type="match status" value="1"/>
</dbReference>
<dbReference type="FunFam" id="4.10.520.10:FF:000002">
    <property type="entry name" value="Integration host factor subunit alpha"/>
    <property type="match status" value="1"/>
</dbReference>
<dbReference type="Gene3D" id="4.10.520.10">
    <property type="entry name" value="IHF-like DNA-binding proteins"/>
    <property type="match status" value="1"/>
</dbReference>
<dbReference type="HAMAP" id="MF_00380">
    <property type="entry name" value="IHF_alpha"/>
    <property type="match status" value="1"/>
</dbReference>
<dbReference type="InterPro" id="IPR000119">
    <property type="entry name" value="Hist_DNA-bd"/>
</dbReference>
<dbReference type="InterPro" id="IPR020816">
    <property type="entry name" value="Histone-like_DNA-bd_CS"/>
</dbReference>
<dbReference type="InterPro" id="IPR010992">
    <property type="entry name" value="IHF-like_DNA-bd_dom_sf"/>
</dbReference>
<dbReference type="InterPro" id="IPR005684">
    <property type="entry name" value="IHF_alpha"/>
</dbReference>
<dbReference type="NCBIfam" id="TIGR00987">
    <property type="entry name" value="himA"/>
    <property type="match status" value="1"/>
</dbReference>
<dbReference type="NCBIfam" id="NF001401">
    <property type="entry name" value="PRK00285.1"/>
    <property type="match status" value="1"/>
</dbReference>
<dbReference type="PANTHER" id="PTHR33175">
    <property type="entry name" value="DNA-BINDING PROTEIN HU"/>
    <property type="match status" value="1"/>
</dbReference>
<dbReference type="PANTHER" id="PTHR33175:SF2">
    <property type="entry name" value="INTEGRATION HOST FACTOR SUBUNIT ALPHA"/>
    <property type="match status" value="1"/>
</dbReference>
<dbReference type="Pfam" id="PF00216">
    <property type="entry name" value="Bac_DNA_binding"/>
    <property type="match status" value="1"/>
</dbReference>
<dbReference type="PRINTS" id="PR01727">
    <property type="entry name" value="DNABINDINGHU"/>
</dbReference>
<dbReference type="SMART" id="SM00411">
    <property type="entry name" value="BHL"/>
    <property type="match status" value="1"/>
</dbReference>
<dbReference type="SUPFAM" id="SSF47729">
    <property type="entry name" value="IHF-like DNA-binding proteins"/>
    <property type="match status" value="1"/>
</dbReference>
<dbReference type="PROSITE" id="PS00045">
    <property type="entry name" value="HISTONE_LIKE"/>
    <property type="match status" value="1"/>
</dbReference>
<proteinExistence type="inferred from homology"/>
<name>IHFA_SHEHH</name>
<accession>B0TQY4</accession>
<feature type="chain" id="PRO_1000080038" description="Integration host factor subunit alpha">
    <location>
        <begin position="1"/>
        <end position="98"/>
    </location>
</feature>
<feature type="region of interest" description="Disordered" evidence="2">
    <location>
        <begin position="49"/>
        <end position="71"/>
    </location>
</feature>
<organism>
    <name type="scientific">Shewanella halifaxensis (strain HAW-EB4)</name>
    <dbReference type="NCBI Taxonomy" id="458817"/>
    <lineage>
        <taxon>Bacteria</taxon>
        <taxon>Pseudomonadati</taxon>
        <taxon>Pseudomonadota</taxon>
        <taxon>Gammaproteobacteria</taxon>
        <taxon>Alteromonadales</taxon>
        <taxon>Shewanellaceae</taxon>
        <taxon>Shewanella</taxon>
    </lineage>
</organism>
<sequence length="98" mass="11147">MALTKAEMAEHLFETLGINKRVAKEMVETFFEEIRQALESGEQVKLSGFGNFDLRDKNQRPGRNPKTGEDIPISARRVVTFRPGQKLKSRVEEANAKK</sequence>
<evidence type="ECO:0000255" key="1">
    <source>
        <dbReference type="HAMAP-Rule" id="MF_00380"/>
    </source>
</evidence>
<evidence type="ECO:0000256" key="2">
    <source>
        <dbReference type="SAM" id="MobiDB-lite"/>
    </source>
</evidence>
<protein>
    <recommendedName>
        <fullName evidence="1">Integration host factor subunit alpha</fullName>
        <shortName evidence="1">IHF-alpha</shortName>
    </recommendedName>
</protein>
<comment type="function">
    <text evidence="1">This protein is one of the two subunits of integration host factor, a specific DNA-binding protein that functions in genetic recombination as well as in transcriptional and translational control.</text>
</comment>
<comment type="subunit">
    <text evidence="1">Heterodimer of an alpha and a beta chain.</text>
</comment>
<comment type="similarity">
    <text evidence="1">Belongs to the bacterial histone-like protein family.</text>
</comment>
<reference key="1">
    <citation type="submission" date="2008-01" db="EMBL/GenBank/DDBJ databases">
        <title>Complete sequence of Shewanella halifaxensis HAW-EB4.</title>
        <authorList>
            <consortium name="US DOE Joint Genome Institute"/>
            <person name="Copeland A."/>
            <person name="Lucas S."/>
            <person name="Lapidus A."/>
            <person name="Glavina del Rio T."/>
            <person name="Dalin E."/>
            <person name="Tice H."/>
            <person name="Bruce D."/>
            <person name="Goodwin L."/>
            <person name="Pitluck S."/>
            <person name="Sims D."/>
            <person name="Brettin T."/>
            <person name="Detter J.C."/>
            <person name="Han C."/>
            <person name="Kuske C.R."/>
            <person name="Schmutz J."/>
            <person name="Larimer F."/>
            <person name="Land M."/>
            <person name="Hauser L."/>
            <person name="Kyrpides N."/>
            <person name="Kim E."/>
            <person name="Zhao J.-S."/>
            <person name="Richardson P."/>
        </authorList>
    </citation>
    <scope>NUCLEOTIDE SEQUENCE [LARGE SCALE GENOMIC DNA]</scope>
    <source>
        <strain>HAW-EB4</strain>
    </source>
</reference>
<keyword id="KW-0233">DNA recombination</keyword>
<keyword id="KW-0238">DNA-binding</keyword>
<keyword id="KW-0804">Transcription</keyword>
<keyword id="KW-0805">Transcription regulation</keyword>
<keyword id="KW-0810">Translation regulation</keyword>
<gene>
    <name evidence="1" type="primary">ihfA</name>
    <name evidence="1" type="synonym">himA</name>
    <name type="ordered locus">Shal_1814</name>
</gene>